<evidence type="ECO:0000255" key="1">
    <source>
        <dbReference type="HAMAP-Rule" id="MF_00184"/>
    </source>
</evidence>
<evidence type="ECO:0000255" key="2">
    <source>
        <dbReference type="PROSITE-ProRule" id="PRU01228"/>
    </source>
</evidence>
<organism>
    <name type="scientific">Acetivibrio thermocellus (strain ATCC 27405 / DSM 1237 / JCM 9322 / NBRC 103400 / NCIMB 10682 / NRRL B-4536 / VPI 7372)</name>
    <name type="common">Clostridium thermocellum</name>
    <dbReference type="NCBI Taxonomy" id="203119"/>
    <lineage>
        <taxon>Bacteria</taxon>
        <taxon>Bacillati</taxon>
        <taxon>Bacillota</taxon>
        <taxon>Clostridia</taxon>
        <taxon>Eubacteriales</taxon>
        <taxon>Oscillospiraceae</taxon>
        <taxon>Acetivibrio</taxon>
    </lineage>
</organism>
<protein>
    <recommendedName>
        <fullName evidence="1">Threonine--tRNA ligase</fullName>
        <ecNumber evidence="1">6.1.1.3</ecNumber>
    </recommendedName>
    <alternativeName>
        <fullName evidence="1">Threonyl-tRNA synthetase</fullName>
        <shortName evidence="1">ThrRS</shortName>
    </alternativeName>
</protein>
<reference key="1">
    <citation type="submission" date="2007-02" db="EMBL/GenBank/DDBJ databases">
        <title>Complete sequence of Clostridium thermocellum ATCC 27405.</title>
        <authorList>
            <consortium name="US DOE Joint Genome Institute"/>
            <person name="Copeland A."/>
            <person name="Lucas S."/>
            <person name="Lapidus A."/>
            <person name="Barry K."/>
            <person name="Detter J.C."/>
            <person name="Glavina del Rio T."/>
            <person name="Hammon N."/>
            <person name="Israni S."/>
            <person name="Dalin E."/>
            <person name="Tice H."/>
            <person name="Pitluck S."/>
            <person name="Chertkov O."/>
            <person name="Brettin T."/>
            <person name="Bruce D."/>
            <person name="Han C."/>
            <person name="Tapia R."/>
            <person name="Gilna P."/>
            <person name="Schmutz J."/>
            <person name="Larimer F."/>
            <person name="Land M."/>
            <person name="Hauser L."/>
            <person name="Kyrpides N."/>
            <person name="Mikhailova N."/>
            <person name="Wu J.H.D."/>
            <person name="Newcomb M."/>
            <person name="Richardson P."/>
        </authorList>
    </citation>
    <scope>NUCLEOTIDE SEQUENCE [LARGE SCALE GENOMIC DNA]</scope>
    <source>
        <strain>ATCC 27405 / DSM 1237 / JCM 9322 / NBRC 103400 / NCIMB 10682 / NRRL B-4536 / VPI 7372</strain>
    </source>
</reference>
<proteinExistence type="inferred from homology"/>
<sequence length="635" mass="73565">MIKITLKDGSVREYNEGITIKEVAESISAGLARVALAGEVNGEVKDLSYPLENDCTLNLLTFDDEGGRDAYRHTTSHILAQAVKRLYPDAKLAIGPAIENGFYYDFDVEKPFSVEDLEKIEEEMKKIIKEDYKLERFTLPREEAIKFMEERNEPYKVELIRDLPEGETISFYKQGDFVDLCAGPHIESTGKVKAFKLMSVAGAYWRGNEKNKMLQRIYGTSFTKKSDLDAYITRIEEAKKRDHRKLGRELDLFDIYEEGPGFPFFMPKGMVLRNVLEEYWREEHRKAGYQEIKTPIILNEELWHRSGHWDHYKENMYFTKIDEADFAIKPMNCPGGMLVYKRKLHSYRDLPQRLAELGLVHRHELSGVLHGLMRVRCFTQDDAHIFMTPDQIESEILGVISLIDDFYKVFGFKYHVELSTRPENSMGSDEDWERATNALKNALEKKGIDYKINEGDGAFYGPKIDFHLEDSIGRTWQCGTIQLDFQMPERFDLTYIGPDGEKHRPVMIHRVVFGSIERFIAILTEHYAGAFPVWLSPVQVKILPILEKQHDYVAEVKKALEEKGVRVEADLRNEKIGYKIREAQLEKVPYMLVIGDKEMENRTVAVRSRKDGDLGPMRLEDFVNRIVEAIKNKEN</sequence>
<comment type="function">
    <text evidence="1">Catalyzes the attachment of threonine to tRNA(Thr) in a two-step reaction: L-threonine is first activated by ATP to form Thr-AMP and then transferred to the acceptor end of tRNA(Thr). Also edits incorrectly charged L-seryl-tRNA(Thr).</text>
</comment>
<comment type="catalytic activity">
    <reaction evidence="1">
        <text>tRNA(Thr) + L-threonine + ATP = L-threonyl-tRNA(Thr) + AMP + diphosphate + H(+)</text>
        <dbReference type="Rhea" id="RHEA:24624"/>
        <dbReference type="Rhea" id="RHEA-COMP:9670"/>
        <dbReference type="Rhea" id="RHEA-COMP:9704"/>
        <dbReference type="ChEBI" id="CHEBI:15378"/>
        <dbReference type="ChEBI" id="CHEBI:30616"/>
        <dbReference type="ChEBI" id="CHEBI:33019"/>
        <dbReference type="ChEBI" id="CHEBI:57926"/>
        <dbReference type="ChEBI" id="CHEBI:78442"/>
        <dbReference type="ChEBI" id="CHEBI:78534"/>
        <dbReference type="ChEBI" id="CHEBI:456215"/>
        <dbReference type="EC" id="6.1.1.3"/>
    </reaction>
</comment>
<comment type="cofactor">
    <cofactor evidence="1">
        <name>Zn(2+)</name>
        <dbReference type="ChEBI" id="CHEBI:29105"/>
    </cofactor>
    <text evidence="1">Binds 1 zinc ion per subunit.</text>
</comment>
<comment type="subunit">
    <text evidence="1">Homodimer.</text>
</comment>
<comment type="subcellular location">
    <subcellularLocation>
        <location evidence="1">Cytoplasm</location>
    </subcellularLocation>
</comment>
<comment type="similarity">
    <text evidence="1">Belongs to the class-II aminoacyl-tRNA synthetase family.</text>
</comment>
<accession>A3DET1</accession>
<keyword id="KW-0030">Aminoacyl-tRNA synthetase</keyword>
<keyword id="KW-0067">ATP-binding</keyword>
<keyword id="KW-0963">Cytoplasm</keyword>
<keyword id="KW-0436">Ligase</keyword>
<keyword id="KW-0479">Metal-binding</keyword>
<keyword id="KW-0547">Nucleotide-binding</keyword>
<keyword id="KW-0648">Protein biosynthesis</keyword>
<keyword id="KW-1185">Reference proteome</keyword>
<keyword id="KW-0694">RNA-binding</keyword>
<keyword id="KW-0820">tRNA-binding</keyword>
<keyword id="KW-0862">Zinc</keyword>
<name>SYT_ACET2</name>
<feature type="chain" id="PRO_1000020375" description="Threonine--tRNA ligase">
    <location>
        <begin position="1"/>
        <end position="635"/>
    </location>
</feature>
<feature type="domain" description="TGS" evidence="2">
    <location>
        <begin position="1"/>
        <end position="61"/>
    </location>
</feature>
<feature type="region of interest" description="Catalytic" evidence="1">
    <location>
        <begin position="242"/>
        <end position="532"/>
    </location>
</feature>
<feature type="binding site" evidence="1">
    <location>
        <position position="333"/>
    </location>
    <ligand>
        <name>Zn(2+)</name>
        <dbReference type="ChEBI" id="CHEBI:29105"/>
    </ligand>
</feature>
<feature type="binding site" evidence="1">
    <location>
        <position position="384"/>
    </location>
    <ligand>
        <name>Zn(2+)</name>
        <dbReference type="ChEBI" id="CHEBI:29105"/>
    </ligand>
</feature>
<feature type="binding site" evidence="1">
    <location>
        <position position="509"/>
    </location>
    <ligand>
        <name>Zn(2+)</name>
        <dbReference type="ChEBI" id="CHEBI:29105"/>
    </ligand>
</feature>
<dbReference type="EC" id="6.1.1.3" evidence="1"/>
<dbReference type="EMBL" id="CP000568">
    <property type="protein sequence ID" value="ABN52460.1"/>
    <property type="molecule type" value="Genomic_DNA"/>
</dbReference>
<dbReference type="RefSeq" id="WP_003519104.1">
    <property type="nucleotide sequence ID" value="NC_009012.1"/>
</dbReference>
<dbReference type="SMR" id="A3DET1"/>
<dbReference type="STRING" id="203119.Cthe_1228"/>
<dbReference type="GeneID" id="35804631"/>
<dbReference type="KEGG" id="cth:Cthe_1228"/>
<dbReference type="eggNOG" id="COG0441">
    <property type="taxonomic scope" value="Bacteria"/>
</dbReference>
<dbReference type="HOGENOM" id="CLU_008554_0_1_9"/>
<dbReference type="OrthoDB" id="9802304at2"/>
<dbReference type="Proteomes" id="UP000002145">
    <property type="component" value="Chromosome"/>
</dbReference>
<dbReference type="GO" id="GO:0005737">
    <property type="term" value="C:cytoplasm"/>
    <property type="evidence" value="ECO:0007669"/>
    <property type="project" value="UniProtKB-SubCell"/>
</dbReference>
<dbReference type="GO" id="GO:0005524">
    <property type="term" value="F:ATP binding"/>
    <property type="evidence" value="ECO:0007669"/>
    <property type="project" value="UniProtKB-UniRule"/>
</dbReference>
<dbReference type="GO" id="GO:0140096">
    <property type="term" value="F:catalytic activity, acting on a protein"/>
    <property type="evidence" value="ECO:0007669"/>
    <property type="project" value="UniProtKB-ARBA"/>
</dbReference>
<dbReference type="GO" id="GO:0046872">
    <property type="term" value="F:metal ion binding"/>
    <property type="evidence" value="ECO:0007669"/>
    <property type="project" value="UniProtKB-KW"/>
</dbReference>
<dbReference type="GO" id="GO:0004829">
    <property type="term" value="F:threonine-tRNA ligase activity"/>
    <property type="evidence" value="ECO:0007669"/>
    <property type="project" value="UniProtKB-UniRule"/>
</dbReference>
<dbReference type="GO" id="GO:0016740">
    <property type="term" value="F:transferase activity"/>
    <property type="evidence" value="ECO:0007669"/>
    <property type="project" value="UniProtKB-ARBA"/>
</dbReference>
<dbReference type="GO" id="GO:0000049">
    <property type="term" value="F:tRNA binding"/>
    <property type="evidence" value="ECO:0007669"/>
    <property type="project" value="UniProtKB-KW"/>
</dbReference>
<dbReference type="GO" id="GO:0006435">
    <property type="term" value="P:threonyl-tRNA aminoacylation"/>
    <property type="evidence" value="ECO:0007669"/>
    <property type="project" value="UniProtKB-UniRule"/>
</dbReference>
<dbReference type="CDD" id="cd01667">
    <property type="entry name" value="TGS_ThrRS"/>
    <property type="match status" value="1"/>
</dbReference>
<dbReference type="CDD" id="cd00860">
    <property type="entry name" value="ThrRS_anticodon"/>
    <property type="match status" value="1"/>
</dbReference>
<dbReference type="CDD" id="cd00771">
    <property type="entry name" value="ThrRS_core"/>
    <property type="match status" value="1"/>
</dbReference>
<dbReference type="FunFam" id="3.10.20.30:FF:000005">
    <property type="entry name" value="Threonine--tRNA ligase"/>
    <property type="match status" value="1"/>
</dbReference>
<dbReference type="FunFam" id="3.30.54.20:FF:000002">
    <property type="entry name" value="Threonine--tRNA ligase"/>
    <property type="match status" value="1"/>
</dbReference>
<dbReference type="FunFam" id="3.30.930.10:FF:000002">
    <property type="entry name" value="Threonine--tRNA ligase"/>
    <property type="match status" value="1"/>
</dbReference>
<dbReference type="FunFam" id="3.40.50.800:FF:000001">
    <property type="entry name" value="Threonine--tRNA ligase"/>
    <property type="match status" value="1"/>
</dbReference>
<dbReference type="FunFam" id="3.30.980.10:FF:000005">
    <property type="entry name" value="Threonyl-tRNA synthetase, mitochondrial"/>
    <property type="match status" value="1"/>
</dbReference>
<dbReference type="Gene3D" id="3.10.20.30">
    <property type="match status" value="1"/>
</dbReference>
<dbReference type="Gene3D" id="3.30.54.20">
    <property type="match status" value="1"/>
</dbReference>
<dbReference type="Gene3D" id="3.40.50.800">
    <property type="entry name" value="Anticodon-binding domain"/>
    <property type="match status" value="1"/>
</dbReference>
<dbReference type="Gene3D" id="3.30.930.10">
    <property type="entry name" value="Bira Bifunctional Protein, Domain 2"/>
    <property type="match status" value="1"/>
</dbReference>
<dbReference type="Gene3D" id="3.30.980.10">
    <property type="entry name" value="Threonyl-trna Synthetase, Chain A, domain 2"/>
    <property type="match status" value="1"/>
</dbReference>
<dbReference type="HAMAP" id="MF_00184">
    <property type="entry name" value="Thr_tRNA_synth"/>
    <property type="match status" value="1"/>
</dbReference>
<dbReference type="InterPro" id="IPR002314">
    <property type="entry name" value="aa-tRNA-synt_IIb"/>
</dbReference>
<dbReference type="InterPro" id="IPR006195">
    <property type="entry name" value="aa-tRNA-synth_II"/>
</dbReference>
<dbReference type="InterPro" id="IPR045864">
    <property type="entry name" value="aa-tRNA-synth_II/BPL/LPL"/>
</dbReference>
<dbReference type="InterPro" id="IPR004154">
    <property type="entry name" value="Anticodon-bd"/>
</dbReference>
<dbReference type="InterPro" id="IPR036621">
    <property type="entry name" value="Anticodon-bd_dom_sf"/>
</dbReference>
<dbReference type="InterPro" id="IPR012675">
    <property type="entry name" value="Beta-grasp_dom_sf"/>
</dbReference>
<dbReference type="InterPro" id="IPR004095">
    <property type="entry name" value="TGS"/>
</dbReference>
<dbReference type="InterPro" id="IPR012676">
    <property type="entry name" value="TGS-like"/>
</dbReference>
<dbReference type="InterPro" id="IPR002320">
    <property type="entry name" value="Thr-tRNA-ligase_IIa"/>
</dbReference>
<dbReference type="InterPro" id="IPR018163">
    <property type="entry name" value="Thr/Ala-tRNA-synth_IIc_edit"/>
</dbReference>
<dbReference type="InterPro" id="IPR047246">
    <property type="entry name" value="ThrRS_anticodon"/>
</dbReference>
<dbReference type="InterPro" id="IPR033728">
    <property type="entry name" value="ThrRS_core"/>
</dbReference>
<dbReference type="InterPro" id="IPR012947">
    <property type="entry name" value="tRNA_SAD"/>
</dbReference>
<dbReference type="NCBIfam" id="TIGR00418">
    <property type="entry name" value="thrS"/>
    <property type="match status" value="1"/>
</dbReference>
<dbReference type="PANTHER" id="PTHR11451:SF44">
    <property type="entry name" value="THREONINE--TRNA LIGASE, CHLOROPLASTIC_MITOCHONDRIAL 2"/>
    <property type="match status" value="1"/>
</dbReference>
<dbReference type="PANTHER" id="PTHR11451">
    <property type="entry name" value="THREONINE-TRNA LIGASE"/>
    <property type="match status" value="1"/>
</dbReference>
<dbReference type="Pfam" id="PF03129">
    <property type="entry name" value="HGTP_anticodon"/>
    <property type="match status" value="1"/>
</dbReference>
<dbReference type="Pfam" id="PF02824">
    <property type="entry name" value="TGS"/>
    <property type="match status" value="1"/>
</dbReference>
<dbReference type="Pfam" id="PF00587">
    <property type="entry name" value="tRNA-synt_2b"/>
    <property type="match status" value="1"/>
</dbReference>
<dbReference type="Pfam" id="PF07973">
    <property type="entry name" value="tRNA_SAD"/>
    <property type="match status" value="1"/>
</dbReference>
<dbReference type="PRINTS" id="PR01047">
    <property type="entry name" value="TRNASYNTHTHR"/>
</dbReference>
<dbReference type="SMART" id="SM00863">
    <property type="entry name" value="tRNA_SAD"/>
    <property type="match status" value="1"/>
</dbReference>
<dbReference type="SUPFAM" id="SSF52954">
    <property type="entry name" value="Class II aaRS ABD-related"/>
    <property type="match status" value="1"/>
</dbReference>
<dbReference type="SUPFAM" id="SSF55681">
    <property type="entry name" value="Class II aaRS and biotin synthetases"/>
    <property type="match status" value="1"/>
</dbReference>
<dbReference type="SUPFAM" id="SSF81271">
    <property type="entry name" value="TGS-like"/>
    <property type="match status" value="1"/>
</dbReference>
<dbReference type="SUPFAM" id="SSF55186">
    <property type="entry name" value="ThrRS/AlaRS common domain"/>
    <property type="match status" value="1"/>
</dbReference>
<dbReference type="PROSITE" id="PS50862">
    <property type="entry name" value="AA_TRNA_LIGASE_II"/>
    <property type="match status" value="1"/>
</dbReference>
<dbReference type="PROSITE" id="PS51880">
    <property type="entry name" value="TGS"/>
    <property type="match status" value="1"/>
</dbReference>
<gene>
    <name evidence="1" type="primary">thrS</name>
    <name type="ordered locus">Cthe_1228</name>
</gene>